<dbReference type="EMBL" id="AK005730">
    <property type="protein sequence ID" value="BAB24209.1"/>
    <property type="molecule type" value="mRNA"/>
</dbReference>
<dbReference type="EMBL" id="BC048596">
    <property type="protein sequence ID" value="AAH48596.1"/>
    <property type="molecule type" value="mRNA"/>
</dbReference>
<dbReference type="CCDS" id="CCDS21912.1"/>
<dbReference type="RefSeq" id="NP_081313.1">
    <property type="nucleotide sequence ID" value="NM_027037.2"/>
</dbReference>
<dbReference type="SMR" id="Q9DAL9"/>
<dbReference type="PhosphoSitePlus" id="Q9DAL9"/>
<dbReference type="PaxDb" id="10090-ENSMUSP00000139545"/>
<dbReference type="DNASU" id="69318"/>
<dbReference type="Ensembl" id="ENSMUST00000033146.8">
    <property type="protein sequence ID" value="ENSMUSP00000033146.8"/>
    <property type="gene ID" value="ENSMUSG00000030858.11"/>
</dbReference>
<dbReference type="Ensembl" id="ENSMUST00000188899.2">
    <property type="protein sequence ID" value="ENSMUSP00000139545.2"/>
    <property type="gene ID" value="ENSMUSG00000030858.11"/>
</dbReference>
<dbReference type="GeneID" id="69318"/>
<dbReference type="KEGG" id="mmu:69318"/>
<dbReference type="UCSC" id="uc009kbd.1">
    <property type="organism name" value="mouse"/>
</dbReference>
<dbReference type="AGR" id="MGI:1916568"/>
<dbReference type="CTD" id="196792"/>
<dbReference type="MGI" id="MGI:1916568">
    <property type="gene designation" value="1700007K09Rik"/>
</dbReference>
<dbReference type="VEuPathDB" id="HostDB:ENSMUSG00000030858"/>
<dbReference type="eggNOG" id="ENOG502TEP5">
    <property type="taxonomic scope" value="Eukaryota"/>
</dbReference>
<dbReference type="GeneTree" id="ENSGT00940000164044"/>
<dbReference type="HOGENOM" id="CLU_160106_0_0_1"/>
<dbReference type="InParanoid" id="Q9DAL9"/>
<dbReference type="OMA" id="MFCIGGG"/>
<dbReference type="OrthoDB" id="9784605at2759"/>
<dbReference type="PhylomeDB" id="Q9DAL9"/>
<dbReference type="TreeFam" id="TF338384"/>
<dbReference type="BioGRID-ORCS" id="69318">
    <property type="hits" value="2 hits in 77 CRISPR screens"/>
</dbReference>
<dbReference type="PRO" id="PR:Q9DAL9"/>
<dbReference type="Proteomes" id="UP000000589">
    <property type="component" value="Chromosome 7"/>
</dbReference>
<dbReference type="RNAct" id="Q9DAL9">
    <property type="molecule type" value="protein"/>
</dbReference>
<dbReference type="Bgee" id="ENSMUSG00000030858">
    <property type="expression patterns" value="Expressed in spermatid and 29 other cell types or tissues"/>
</dbReference>
<dbReference type="GO" id="GO:0005576">
    <property type="term" value="C:extracellular region"/>
    <property type="evidence" value="ECO:0007669"/>
    <property type="project" value="UniProtKB-SubCell"/>
</dbReference>
<dbReference type="InterPro" id="IPR028122">
    <property type="entry name" value="FAM24"/>
</dbReference>
<dbReference type="PANTHER" id="PTHR35860:SF4">
    <property type="entry name" value="PROTEIN FAM24A-LIKE"/>
    <property type="match status" value="1"/>
</dbReference>
<dbReference type="PANTHER" id="PTHR35860">
    <property type="entry name" value="PROTEIN FAM24B"/>
    <property type="match status" value="1"/>
</dbReference>
<dbReference type="Pfam" id="PF15193">
    <property type="entry name" value="FAM24"/>
    <property type="match status" value="2"/>
</dbReference>
<proteinExistence type="inferred from homology"/>
<accession>Q9DAL9</accession>
<keyword id="KW-1185">Reference proteome</keyword>
<keyword id="KW-0964">Secreted</keyword>
<keyword id="KW-0732">Signal</keyword>
<protein>
    <recommendedName>
        <fullName>Protein FAM24A-like</fullName>
    </recommendedName>
</protein>
<organism>
    <name type="scientific">Mus musculus</name>
    <name type="common">Mouse</name>
    <dbReference type="NCBI Taxonomy" id="10090"/>
    <lineage>
        <taxon>Eukaryota</taxon>
        <taxon>Metazoa</taxon>
        <taxon>Chordata</taxon>
        <taxon>Craniata</taxon>
        <taxon>Vertebrata</taxon>
        <taxon>Euteleostomi</taxon>
        <taxon>Mammalia</taxon>
        <taxon>Eutheria</taxon>
        <taxon>Euarchontoglires</taxon>
        <taxon>Glires</taxon>
        <taxon>Rodentia</taxon>
        <taxon>Myomorpha</taxon>
        <taxon>Muroidea</taxon>
        <taxon>Muridae</taxon>
        <taxon>Murinae</taxon>
        <taxon>Mus</taxon>
        <taxon>Mus</taxon>
    </lineage>
</organism>
<reference key="1">
    <citation type="journal article" date="2005" name="Science">
        <title>The transcriptional landscape of the mammalian genome.</title>
        <authorList>
            <person name="Carninci P."/>
            <person name="Kasukawa T."/>
            <person name="Katayama S."/>
            <person name="Gough J."/>
            <person name="Frith M.C."/>
            <person name="Maeda N."/>
            <person name="Oyama R."/>
            <person name="Ravasi T."/>
            <person name="Lenhard B."/>
            <person name="Wells C."/>
            <person name="Kodzius R."/>
            <person name="Shimokawa K."/>
            <person name="Bajic V.B."/>
            <person name="Brenner S.E."/>
            <person name="Batalov S."/>
            <person name="Forrest A.R."/>
            <person name="Zavolan M."/>
            <person name="Davis M.J."/>
            <person name="Wilming L.G."/>
            <person name="Aidinis V."/>
            <person name="Allen J.E."/>
            <person name="Ambesi-Impiombato A."/>
            <person name="Apweiler R."/>
            <person name="Aturaliya R.N."/>
            <person name="Bailey T.L."/>
            <person name="Bansal M."/>
            <person name="Baxter L."/>
            <person name="Beisel K.W."/>
            <person name="Bersano T."/>
            <person name="Bono H."/>
            <person name="Chalk A.M."/>
            <person name="Chiu K.P."/>
            <person name="Choudhary V."/>
            <person name="Christoffels A."/>
            <person name="Clutterbuck D.R."/>
            <person name="Crowe M.L."/>
            <person name="Dalla E."/>
            <person name="Dalrymple B.P."/>
            <person name="de Bono B."/>
            <person name="Della Gatta G."/>
            <person name="di Bernardo D."/>
            <person name="Down T."/>
            <person name="Engstrom P."/>
            <person name="Fagiolini M."/>
            <person name="Faulkner G."/>
            <person name="Fletcher C.F."/>
            <person name="Fukushima T."/>
            <person name="Furuno M."/>
            <person name="Futaki S."/>
            <person name="Gariboldi M."/>
            <person name="Georgii-Hemming P."/>
            <person name="Gingeras T.R."/>
            <person name="Gojobori T."/>
            <person name="Green R.E."/>
            <person name="Gustincich S."/>
            <person name="Harbers M."/>
            <person name="Hayashi Y."/>
            <person name="Hensch T.K."/>
            <person name="Hirokawa N."/>
            <person name="Hill D."/>
            <person name="Huminiecki L."/>
            <person name="Iacono M."/>
            <person name="Ikeo K."/>
            <person name="Iwama A."/>
            <person name="Ishikawa T."/>
            <person name="Jakt M."/>
            <person name="Kanapin A."/>
            <person name="Katoh M."/>
            <person name="Kawasawa Y."/>
            <person name="Kelso J."/>
            <person name="Kitamura H."/>
            <person name="Kitano H."/>
            <person name="Kollias G."/>
            <person name="Krishnan S.P."/>
            <person name="Kruger A."/>
            <person name="Kummerfeld S.K."/>
            <person name="Kurochkin I.V."/>
            <person name="Lareau L.F."/>
            <person name="Lazarevic D."/>
            <person name="Lipovich L."/>
            <person name="Liu J."/>
            <person name="Liuni S."/>
            <person name="McWilliam S."/>
            <person name="Madan Babu M."/>
            <person name="Madera M."/>
            <person name="Marchionni L."/>
            <person name="Matsuda H."/>
            <person name="Matsuzawa S."/>
            <person name="Miki H."/>
            <person name="Mignone F."/>
            <person name="Miyake S."/>
            <person name="Morris K."/>
            <person name="Mottagui-Tabar S."/>
            <person name="Mulder N."/>
            <person name="Nakano N."/>
            <person name="Nakauchi H."/>
            <person name="Ng P."/>
            <person name="Nilsson R."/>
            <person name="Nishiguchi S."/>
            <person name="Nishikawa S."/>
            <person name="Nori F."/>
            <person name="Ohara O."/>
            <person name="Okazaki Y."/>
            <person name="Orlando V."/>
            <person name="Pang K.C."/>
            <person name="Pavan W.J."/>
            <person name="Pavesi G."/>
            <person name="Pesole G."/>
            <person name="Petrovsky N."/>
            <person name="Piazza S."/>
            <person name="Reed J."/>
            <person name="Reid J.F."/>
            <person name="Ring B.Z."/>
            <person name="Ringwald M."/>
            <person name="Rost B."/>
            <person name="Ruan Y."/>
            <person name="Salzberg S.L."/>
            <person name="Sandelin A."/>
            <person name="Schneider C."/>
            <person name="Schoenbach C."/>
            <person name="Sekiguchi K."/>
            <person name="Semple C.A."/>
            <person name="Seno S."/>
            <person name="Sessa L."/>
            <person name="Sheng Y."/>
            <person name="Shibata Y."/>
            <person name="Shimada H."/>
            <person name="Shimada K."/>
            <person name="Silva D."/>
            <person name="Sinclair B."/>
            <person name="Sperling S."/>
            <person name="Stupka E."/>
            <person name="Sugiura K."/>
            <person name="Sultana R."/>
            <person name="Takenaka Y."/>
            <person name="Taki K."/>
            <person name="Tammoja K."/>
            <person name="Tan S.L."/>
            <person name="Tang S."/>
            <person name="Taylor M.S."/>
            <person name="Tegner J."/>
            <person name="Teichmann S.A."/>
            <person name="Ueda H.R."/>
            <person name="van Nimwegen E."/>
            <person name="Verardo R."/>
            <person name="Wei C.L."/>
            <person name="Yagi K."/>
            <person name="Yamanishi H."/>
            <person name="Zabarovsky E."/>
            <person name="Zhu S."/>
            <person name="Zimmer A."/>
            <person name="Hide W."/>
            <person name="Bult C."/>
            <person name="Grimmond S.M."/>
            <person name="Teasdale R.D."/>
            <person name="Liu E.T."/>
            <person name="Brusic V."/>
            <person name="Quackenbush J."/>
            <person name="Wahlestedt C."/>
            <person name="Mattick J.S."/>
            <person name="Hume D.A."/>
            <person name="Kai C."/>
            <person name="Sasaki D."/>
            <person name="Tomaru Y."/>
            <person name="Fukuda S."/>
            <person name="Kanamori-Katayama M."/>
            <person name="Suzuki M."/>
            <person name="Aoki J."/>
            <person name="Arakawa T."/>
            <person name="Iida J."/>
            <person name="Imamura K."/>
            <person name="Itoh M."/>
            <person name="Kato T."/>
            <person name="Kawaji H."/>
            <person name="Kawagashira N."/>
            <person name="Kawashima T."/>
            <person name="Kojima M."/>
            <person name="Kondo S."/>
            <person name="Konno H."/>
            <person name="Nakano K."/>
            <person name="Ninomiya N."/>
            <person name="Nishio T."/>
            <person name="Okada M."/>
            <person name="Plessy C."/>
            <person name="Shibata K."/>
            <person name="Shiraki T."/>
            <person name="Suzuki S."/>
            <person name="Tagami M."/>
            <person name="Waki K."/>
            <person name="Watahiki A."/>
            <person name="Okamura-Oho Y."/>
            <person name="Suzuki H."/>
            <person name="Kawai J."/>
            <person name="Hayashizaki Y."/>
        </authorList>
    </citation>
    <scope>NUCLEOTIDE SEQUENCE [LARGE SCALE MRNA]</scope>
    <source>
        <strain>C57BL/6J</strain>
        <tissue>Testis</tissue>
    </source>
</reference>
<reference key="2">
    <citation type="journal article" date="2004" name="Genome Res.">
        <title>The status, quality, and expansion of the NIH full-length cDNA project: the Mammalian Gene Collection (MGC).</title>
        <authorList>
            <consortium name="The MGC Project Team"/>
        </authorList>
    </citation>
    <scope>NUCLEOTIDE SEQUENCE [LARGE SCALE MRNA]</scope>
    <source>
        <tissue>Testis</tissue>
    </source>
</reference>
<name>FA24L_MOUSE</name>
<feature type="signal peptide" evidence="1">
    <location>
        <begin position="1"/>
        <end position="40"/>
    </location>
</feature>
<feature type="chain" id="PRO_0000353118" description="Protein FAM24A-like">
    <location>
        <begin position="41"/>
        <end position="119"/>
    </location>
</feature>
<comment type="subcellular location">
    <subcellularLocation>
        <location evidence="2">Secreted</location>
    </subcellularLocation>
</comment>
<comment type="similarity">
    <text evidence="2">Belongs to the FAM24 family.</text>
</comment>
<evidence type="ECO:0000255" key="1"/>
<evidence type="ECO:0000305" key="2"/>
<sequence length="119" mass="12740">MYKPFDLRTIITIIIGCGILTAMFLLIGLVLCLYSKISKALKSPGIAKEADDECYIDPCKDPHESIILANSIPAEACHSYQANTIAVASCGPLQCCNVCGVYADVNSLPPCLCSIREGL</sequence>